<keyword id="KW-0963">Cytoplasm</keyword>
<keyword id="KW-0342">GTP-binding</keyword>
<keyword id="KW-0378">Hydrolase</keyword>
<keyword id="KW-0479">Metal-binding</keyword>
<keyword id="KW-0547">Nucleotide-binding</keyword>
<keyword id="KW-0690">Ribosome biogenesis</keyword>
<keyword id="KW-0694">RNA-binding</keyword>
<keyword id="KW-0699">rRNA-binding</keyword>
<keyword id="KW-0862">Zinc</keyword>
<dbReference type="EC" id="3.6.1.-" evidence="1"/>
<dbReference type="EMBL" id="CP000680">
    <property type="protein sequence ID" value="ABP83394.1"/>
    <property type="molecule type" value="Genomic_DNA"/>
</dbReference>
<dbReference type="SMR" id="A4XPX8"/>
<dbReference type="STRING" id="399739.Pmen_0626"/>
<dbReference type="KEGG" id="pmy:Pmen_0626"/>
<dbReference type="PATRIC" id="fig|399739.8.peg.633"/>
<dbReference type="eggNOG" id="COG1162">
    <property type="taxonomic scope" value="Bacteria"/>
</dbReference>
<dbReference type="HOGENOM" id="CLU_033617_2_0_6"/>
<dbReference type="OrthoDB" id="9809485at2"/>
<dbReference type="GO" id="GO:0005737">
    <property type="term" value="C:cytoplasm"/>
    <property type="evidence" value="ECO:0007669"/>
    <property type="project" value="UniProtKB-SubCell"/>
</dbReference>
<dbReference type="GO" id="GO:0005525">
    <property type="term" value="F:GTP binding"/>
    <property type="evidence" value="ECO:0007669"/>
    <property type="project" value="UniProtKB-UniRule"/>
</dbReference>
<dbReference type="GO" id="GO:0003924">
    <property type="term" value="F:GTPase activity"/>
    <property type="evidence" value="ECO:0007669"/>
    <property type="project" value="UniProtKB-UniRule"/>
</dbReference>
<dbReference type="GO" id="GO:0046872">
    <property type="term" value="F:metal ion binding"/>
    <property type="evidence" value="ECO:0007669"/>
    <property type="project" value="UniProtKB-KW"/>
</dbReference>
<dbReference type="GO" id="GO:0019843">
    <property type="term" value="F:rRNA binding"/>
    <property type="evidence" value="ECO:0007669"/>
    <property type="project" value="UniProtKB-KW"/>
</dbReference>
<dbReference type="GO" id="GO:0042274">
    <property type="term" value="P:ribosomal small subunit biogenesis"/>
    <property type="evidence" value="ECO:0007669"/>
    <property type="project" value="UniProtKB-UniRule"/>
</dbReference>
<dbReference type="CDD" id="cd01854">
    <property type="entry name" value="YjeQ_EngC"/>
    <property type="match status" value="1"/>
</dbReference>
<dbReference type="Gene3D" id="2.40.50.140">
    <property type="entry name" value="Nucleic acid-binding proteins"/>
    <property type="match status" value="1"/>
</dbReference>
<dbReference type="Gene3D" id="3.40.50.300">
    <property type="entry name" value="P-loop containing nucleotide triphosphate hydrolases"/>
    <property type="match status" value="1"/>
</dbReference>
<dbReference type="Gene3D" id="1.10.40.50">
    <property type="entry name" value="Probable gtpase engc, domain 3"/>
    <property type="match status" value="1"/>
</dbReference>
<dbReference type="HAMAP" id="MF_01820">
    <property type="entry name" value="GTPase_RsgA"/>
    <property type="match status" value="1"/>
</dbReference>
<dbReference type="InterPro" id="IPR030378">
    <property type="entry name" value="G_CP_dom"/>
</dbReference>
<dbReference type="InterPro" id="IPR012340">
    <property type="entry name" value="NA-bd_OB-fold"/>
</dbReference>
<dbReference type="InterPro" id="IPR027417">
    <property type="entry name" value="P-loop_NTPase"/>
</dbReference>
<dbReference type="InterPro" id="IPR004881">
    <property type="entry name" value="Ribosome_biogen_GTPase_RsgA"/>
</dbReference>
<dbReference type="InterPro" id="IPR010914">
    <property type="entry name" value="RsgA_GTPase_dom"/>
</dbReference>
<dbReference type="NCBIfam" id="NF008931">
    <property type="entry name" value="PRK12288.1"/>
    <property type="match status" value="1"/>
</dbReference>
<dbReference type="NCBIfam" id="TIGR00157">
    <property type="entry name" value="ribosome small subunit-dependent GTPase A"/>
    <property type="match status" value="1"/>
</dbReference>
<dbReference type="PANTHER" id="PTHR32120">
    <property type="entry name" value="SMALL RIBOSOMAL SUBUNIT BIOGENESIS GTPASE RSGA"/>
    <property type="match status" value="1"/>
</dbReference>
<dbReference type="PANTHER" id="PTHR32120:SF11">
    <property type="entry name" value="SMALL RIBOSOMAL SUBUNIT BIOGENESIS GTPASE RSGA 1, MITOCHONDRIAL-RELATED"/>
    <property type="match status" value="1"/>
</dbReference>
<dbReference type="Pfam" id="PF03193">
    <property type="entry name" value="RsgA_GTPase"/>
    <property type="match status" value="1"/>
</dbReference>
<dbReference type="SUPFAM" id="SSF52540">
    <property type="entry name" value="P-loop containing nucleoside triphosphate hydrolases"/>
    <property type="match status" value="1"/>
</dbReference>
<dbReference type="PROSITE" id="PS50936">
    <property type="entry name" value="ENGC_GTPASE"/>
    <property type="match status" value="1"/>
</dbReference>
<dbReference type="PROSITE" id="PS51721">
    <property type="entry name" value="G_CP"/>
    <property type="match status" value="1"/>
</dbReference>
<organism>
    <name type="scientific">Ectopseudomonas mendocina (strain ymp)</name>
    <name type="common">Pseudomonas mendocina</name>
    <dbReference type="NCBI Taxonomy" id="399739"/>
    <lineage>
        <taxon>Bacteria</taxon>
        <taxon>Pseudomonadati</taxon>
        <taxon>Pseudomonadota</taxon>
        <taxon>Gammaproteobacteria</taxon>
        <taxon>Pseudomonadales</taxon>
        <taxon>Pseudomonadaceae</taxon>
        <taxon>Ectopseudomonas</taxon>
    </lineage>
</organism>
<gene>
    <name evidence="1" type="primary">rsgA</name>
    <name type="ordered locus">Pmen_0626</name>
</gene>
<feature type="chain" id="PRO_1000188125" description="Small ribosomal subunit biogenesis GTPase RsgA">
    <location>
        <begin position="1"/>
        <end position="343"/>
    </location>
</feature>
<feature type="domain" description="CP-type G" evidence="2">
    <location>
        <begin position="116"/>
        <end position="275"/>
    </location>
</feature>
<feature type="binding site" evidence="1">
    <location>
        <begin position="163"/>
        <end position="166"/>
    </location>
    <ligand>
        <name>GTP</name>
        <dbReference type="ChEBI" id="CHEBI:37565"/>
    </ligand>
</feature>
<feature type="binding site" evidence="1">
    <location>
        <begin position="217"/>
        <end position="225"/>
    </location>
    <ligand>
        <name>GTP</name>
        <dbReference type="ChEBI" id="CHEBI:37565"/>
    </ligand>
</feature>
<feature type="binding site" evidence="1">
    <location>
        <position position="299"/>
    </location>
    <ligand>
        <name>Zn(2+)</name>
        <dbReference type="ChEBI" id="CHEBI:29105"/>
    </ligand>
</feature>
<feature type="binding site" evidence="1">
    <location>
        <position position="304"/>
    </location>
    <ligand>
        <name>Zn(2+)</name>
        <dbReference type="ChEBI" id="CHEBI:29105"/>
    </ligand>
</feature>
<feature type="binding site" evidence="1">
    <location>
        <position position="306"/>
    </location>
    <ligand>
        <name>Zn(2+)</name>
        <dbReference type="ChEBI" id="CHEBI:29105"/>
    </ligand>
</feature>
<feature type="binding site" evidence="1">
    <location>
        <position position="312"/>
    </location>
    <ligand>
        <name>Zn(2+)</name>
        <dbReference type="ChEBI" id="CHEBI:29105"/>
    </ligand>
</feature>
<evidence type="ECO:0000255" key="1">
    <source>
        <dbReference type="HAMAP-Rule" id="MF_01820"/>
    </source>
</evidence>
<evidence type="ECO:0000255" key="2">
    <source>
        <dbReference type="PROSITE-ProRule" id="PRU01058"/>
    </source>
</evidence>
<reference key="1">
    <citation type="submission" date="2007-04" db="EMBL/GenBank/DDBJ databases">
        <title>Complete sequence of Pseudomonas mendocina ymp.</title>
        <authorList>
            <consortium name="US DOE Joint Genome Institute"/>
            <person name="Copeland A."/>
            <person name="Lucas S."/>
            <person name="Lapidus A."/>
            <person name="Barry K."/>
            <person name="Glavina del Rio T."/>
            <person name="Dalin E."/>
            <person name="Tice H."/>
            <person name="Pitluck S."/>
            <person name="Kiss H."/>
            <person name="Brettin T."/>
            <person name="Detter J.C."/>
            <person name="Bruce D."/>
            <person name="Han C."/>
            <person name="Schmutz J."/>
            <person name="Larimer F."/>
            <person name="Land M."/>
            <person name="Hauser L."/>
            <person name="Kyrpides N."/>
            <person name="Mikhailova N."/>
            <person name="Hersman L."/>
            <person name="Dubois J."/>
            <person name="Maurice P."/>
            <person name="Richardson P."/>
        </authorList>
    </citation>
    <scope>NUCLEOTIDE SEQUENCE [LARGE SCALE GENOMIC DNA]</scope>
    <source>
        <strain>ymp</strain>
    </source>
</reference>
<accession>A4XPX8</accession>
<proteinExistence type="inferred from homology"/>
<protein>
    <recommendedName>
        <fullName evidence="1">Small ribosomal subunit biogenesis GTPase RsgA</fullName>
        <ecNumber evidence="1">3.6.1.-</ecNumber>
    </recommendedName>
</protein>
<comment type="function">
    <text evidence="1">One of several proteins that assist in the late maturation steps of the functional core of the 30S ribosomal subunit. Helps release RbfA from mature subunits. May play a role in the assembly of ribosomal proteins into the subunit. Circularly permuted GTPase that catalyzes slow GTP hydrolysis, GTPase activity is stimulated by the 30S ribosomal subunit.</text>
</comment>
<comment type="cofactor">
    <cofactor evidence="1">
        <name>Zn(2+)</name>
        <dbReference type="ChEBI" id="CHEBI:29105"/>
    </cofactor>
    <text evidence="1">Binds 1 zinc ion per subunit.</text>
</comment>
<comment type="subunit">
    <text evidence="1">Monomer. Associates with 30S ribosomal subunit, binds 16S rRNA.</text>
</comment>
<comment type="subcellular location">
    <subcellularLocation>
        <location evidence="1">Cytoplasm</location>
    </subcellularLocation>
</comment>
<comment type="similarity">
    <text evidence="1">Belongs to the TRAFAC class YlqF/YawG GTPase family. RsgA subfamily.</text>
</comment>
<name>RSGA_ECTM1</name>
<sequence length="343" mass="37571">MAKRQLNRRQNWRIEKIQGERAARAAKRESRAVEALEGGDLGPEQTGLVIAHFGVQVEIEGLQGELAGQVFRCHLRANLPALVTGDQVVWRPGNQGDGVIVAQLPRSSELCRPDMRGQLKPVAANVDQIVIVFAPLPEPHANLIDRYLVAAEHAGIRPLLLLNKADLIDEQNQVALEALLKVYRQLGYPLLEVSAHQGDGMEQLKKRLDGHVSVFVGQSGVGKSSLVNGLLPGVDTRVGALSELTGKGTHTTTTARLFHFPGGGQLIDSPGIREFGLGHVSRDDVEAGFIEFHDLLGRCRFRDCKHDREPGCALLQALEDGRIQAQRMASYRHILASLPEDDY</sequence>